<keyword id="KW-0030">Aminoacyl-tRNA synthetase</keyword>
<keyword id="KW-0067">ATP-binding</keyword>
<keyword id="KW-0963">Cytoplasm</keyword>
<keyword id="KW-0436">Ligase</keyword>
<keyword id="KW-0547">Nucleotide-binding</keyword>
<keyword id="KW-0648">Protein biosynthesis</keyword>
<name>SYR_SALPA</name>
<protein>
    <recommendedName>
        <fullName evidence="1">Arginine--tRNA ligase</fullName>
        <ecNumber evidence="1">6.1.1.19</ecNumber>
    </recommendedName>
    <alternativeName>
        <fullName evidence="1">Arginyl-tRNA synthetase</fullName>
        <shortName evidence="1">ArgRS</shortName>
    </alternativeName>
</protein>
<dbReference type="EC" id="6.1.1.19" evidence="1"/>
<dbReference type="EMBL" id="CP000026">
    <property type="protein sequence ID" value="AAV76935.1"/>
    <property type="molecule type" value="Genomic_DNA"/>
</dbReference>
<dbReference type="RefSeq" id="WP_001025370.1">
    <property type="nucleotide sequence ID" value="NC_006511.1"/>
</dbReference>
<dbReference type="SMR" id="Q5PMZ2"/>
<dbReference type="KEGG" id="spt:SPA0960"/>
<dbReference type="HOGENOM" id="CLU_006406_5_1_6"/>
<dbReference type="Proteomes" id="UP000008185">
    <property type="component" value="Chromosome"/>
</dbReference>
<dbReference type="GO" id="GO:0005737">
    <property type="term" value="C:cytoplasm"/>
    <property type="evidence" value="ECO:0007669"/>
    <property type="project" value="UniProtKB-SubCell"/>
</dbReference>
<dbReference type="GO" id="GO:0004814">
    <property type="term" value="F:arginine-tRNA ligase activity"/>
    <property type="evidence" value="ECO:0007669"/>
    <property type="project" value="UniProtKB-UniRule"/>
</dbReference>
<dbReference type="GO" id="GO:0005524">
    <property type="term" value="F:ATP binding"/>
    <property type="evidence" value="ECO:0007669"/>
    <property type="project" value="UniProtKB-UniRule"/>
</dbReference>
<dbReference type="GO" id="GO:0006420">
    <property type="term" value="P:arginyl-tRNA aminoacylation"/>
    <property type="evidence" value="ECO:0007669"/>
    <property type="project" value="UniProtKB-UniRule"/>
</dbReference>
<dbReference type="CDD" id="cd07956">
    <property type="entry name" value="Anticodon_Ia_Arg"/>
    <property type="match status" value="1"/>
</dbReference>
<dbReference type="CDD" id="cd00671">
    <property type="entry name" value="ArgRS_core"/>
    <property type="match status" value="1"/>
</dbReference>
<dbReference type="FunFam" id="1.10.730.10:FF:000001">
    <property type="entry name" value="Arginine--tRNA ligase"/>
    <property type="match status" value="1"/>
</dbReference>
<dbReference type="FunFam" id="3.30.1360.70:FF:000001">
    <property type="entry name" value="Arginine--tRNA ligase"/>
    <property type="match status" value="1"/>
</dbReference>
<dbReference type="FunFam" id="3.40.50.620:FF:000030">
    <property type="entry name" value="Arginine--tRNA ligase"/>
    <property type="match status" value="1"/>
</dbReference>
<dbReference type="Gene3D" id="3.30.1360.70">
    <property type="entry name" value="Arginyl tRNA synthetase N-terminal domain"/>
    <property type="match status" value="1"/>
</dbReference>
<dbReference type="Gene3D" id="3.40.50.620">
    <property type="entry name" value="HUPs"/>
    <property type="match status" value="1"/>
</dbReference>
<dbReference type="Gene3D" id="1.10.730.10">
    <property type="entry name" value="Isoleucyl-tRNA Synthetase, Domain 1"/>
    <property type="match status" value="1"/>
</dbReference>
<dbReference type="HAMAP" id="MF_00123">
    <property type="entry name" value="Arg_tRNA_synth"/>
    <property type="match status" value="1"/>
</dbReference>
<dbReference type="InterPro" id="IPR001412">
    <property type="entry name" value="aa-tRNA-synth_I_CS"/>
</dbReference>
<dbReference type="InterPro" id="IPR001278">
    <property type="entry name" value="Arg-tRNA-ligase"/>
</dbReference>
<dbReference type="InterPro" id="IPR005148">
    <property type="entry name" value="Arg-tRNA-synth_N"/>
</dbReference>
<dbReference type="InterPro" id="IPR036695">
    <property type="entry name" value="Arg-tRNA-synth_N_sf"/>
</dbReference>
<dbReference type="InterPro" id="IPR035684">
    <property type="entry name" value="ArgRS_core"/>
</dbReference>
<dbReference type="InterPro" id="IPR008909">
    <property type="entry name" value="DALR_anticod-bd"/>
</dbReference>
<dbReference type="InterPro" id="IPR014729">
    <property type="entry name" value="Rossmann-like_a/b/a_fold"/>
</dbReference>
<dbReference type="InterPro" id="IPR009080">
    <property type="entry name" value="tRNAsynth_Ia_anticodon-bd"/>
</dbReference>
<dbReference type="NCBIfam" id="TIGR00456">
    <property type="entry name" value="argS"/>
    <property type="match status" value="1"/>
</dbReference>
<dbReference type="PANTHER" id="PTHR11956:SF5">
    <property type="entry name" value="ARGININE--TRNA LIGASE, CYTOPLASMIC"/>
    <property type="match status" value="1"/>
</dbReference>
<dbReference type="PANTHER" id="PTHR11956">
    <property type="entry name" value="ARGINYL-TRNA SYNTHETASE"/>
    <property type="match status" value="1"/>
</dbReference>
<dbReference type="Pfam" id="PF03485">
    <property type="entry name" value="Arg_tRNA_synt_N"/>
    <property type="match status" value="1"/>
</dbReference>
<dbReference type="Pfam" id="PF05746">
    <property type="entry name" value="DALR_1"/>
    <property type="match status" value="1"/>
</dbReference>
<dbReference type="Pfam" id="PF00750">
    <property type="entry name" value="tRNA-synt_1d"/>
    <property type="match status" value="1"/>
</dbReference>
<dbReference type="PRINTS" id="PR01038">
    <property type="entry name" value="TRNASYNTHARG"/>
</dbReference>
<dbReference type="SMART" id="SM01016">
    <property type="entry name" value="Arg_tRNA_synt_N"/>
    <property type="match status" value="1"/>
</dbReference>
<dbReference type="SMART" id="SM00836">
    <property type="entry name" value="DALR_1"/>
    <property type="match status" value="1"/>
</dbReference>
<dbReference type="SUPFAM" id="SSF47323">
    <property type="entry name" value="Anticodon-binding domain of a subclass of class I aminoacyl-tRNA synthetases"/>
    <property type="match status" value="1"/>
</dbReference>
<dbReference type="SUPFAM" id="SSF55190">
    <property type="entry name" value="Arginyl-tRNA synthetase (ArgRS), N-terminal 'additional' domain"/>
    <property type="match status" value="1"/>
</dbReference>
<dbReference type="SUPFAM" id="SSF52374">
    <property type="entry name" value="Nucleotidylyl transferase"/>
    <property type="match status" value="1"/>
</dbReference>
<dbReference type="PROSITE" id="PS00178">
    <property type="entry name" value="AA_TRNA_LIGASE_I"/>
    <property type="match status" value="1"/>
</dbReference>
<evidence type="ECO:0000255" key="1">
    <source>
        <dbReference type="HAMAP-Rule" id="MF_00123"/>
    </source>
</evidence>
<reference key="1">
    <citation type="journal article" date="2004" name="Nat. Genet.">
        <title>Comparison of genome degradation in Paratyphi A and Typhi, human-restricted serovars of Salmonella enterica that cause typhoid.</title>
        <authorList>
            <person name="McClelland M."/>
            <person name="Sanderson K.E."/>
            <person name="Clifton S.W."/>
            <person name="Latreille P."/>
            <person name="Porwollik S."/>
            <person name="Sabo A."/>
            <person name="Meyer R."/>
            <person name="Bieri T."/>
            <person name="Ozersky P."/>
            <person name="McLellan M."/>
            <person name="Harkins C.R."/>
            <person name="Wang C."/>
            <person name="Nguyen C."/>
            <person name="Berghoff A."/>
            <person name="Elliott G."/>
            <person name="Kohlberg S."/>
            <person name="Strong C."/>
            <person name="Du F."/>
            <person name="Carter J."/>
            <person name="Kremizki C."/>
            <person name="Layman D."/>
            <person name="Leonard S."/>
            <person name="Sun H."/>
            <person name="Fulton L."/>
            <person name="Nash W."/>
            <person name="Miner T."/>
            <person name="Minx P."/>
            <person name="Delehaunty K."/>
            <person name="Fronick C."/>
            <person name="Magrini V."/>
            <person name="Nhan M."/>
            <person name="Warren W."/>
            <person name="Florea L."/>
            <person name="Spieth J."/>
            <person name="Wilson R.K."/>
        </authorList>
    </citation>
    <scope>NUCLEOTIDE SEQUENCE [LARGE SCALE GENOMIC DNA]</scope>
    <source>
        <strain>ATCC 9150 / SARB42</strain>
    </source>
</reference>
<feature type="chain" id="PRO_0000242089" description="Arginine--tRNA ligase">
    <location>
        <begin position="1"/>
        <end position="577"/>
    </location>
</feature>
<feature type="short sequence motif" description="'HIGH' region">
    <location>
        <begin position="122"/>
        <end position="132"/>
    </location>
</feature>
<gene>
    <name evidence="1" type="primary">argS</name>
    <name type="ordered locus">SPA0960</name>
</gene>
<sequence>MNIQALLSEKVSQAMIAAGAPADCEPQVRQSAKVQFGDYQANGMMAVAKKLGMAPRQLAEQVLTHLDLSGIASKVEIAGPGFINIFLEPAFLAEQVQQALTSDRLGVSQPTRQTIVVDYSAPNVAKEMHVGHLRSTIIGDAAVRTLEFLGHHVIRANHVGDWGTQFGMLIAWLEKQQQENAGDMALADLEGFYRDAKKHYDEDEAFAERARNYVVKLQSGDTYFREMWRKLVDITMTQNQITYDRLNVTLTRDDVMGESLYNPMLPGIVADLKAKGLAVESEGATVVFLDEFKNKEGDPMGVIIQKKDGGYLYTTTDIACAKYRYETLHADRVLYYIDSRQHQHLMQAWTIVRKAGYVPDSVPLEHHMFGMMLGKDGKPFKTRTGGTVKLADLLDEALERARRLVAEKNPDMPADELEKLANAVGIGAVKYADLSKNRTTDYIFDWDNMLAFEGNTAPYMQYAYTRVLSVFRKADIDEQALASAPVIISEDREAQLAARLLQFEETLTVVAREGTPHVMCAYLYDVAGLFSGFYEHCPILSAENDAVRNSRLKLAQLTAKTLKLGLDTLGIETVERM</sequence>
<accession>Q5PMZ2</accession>
<organism>
    <name type="scientific">Salmonella paratyphi A (strain ATCC 9150 / SARB42)</name>
    <dbReference type="NCBI Taxonomy" id="295319"/>
    <lineage>
        <taxon>Bacteria</taxon>
        <taxon>Pseudomonadati</taxon>
        <taxon>Pseudomonadota</taxon>
        <taxon>Gammaproteobacteria</taxon>
        <taxon>Enterobacterales</taxon>
        <taxon>Enterobacteriaceae</taxon>
        <taxon>Salmonella</taxon>
    </lineage>
</organism>
<comment type="catalytic activity">
    <reaction evidence="1">
        <text>tRNA(Arg) + L-arginine + ATP = L-arginyl-tRNA(Arg) + AMP + diphosphate</text>
        <dbReference type="Rhea" id="RHEA:20301"/>
        <dbReference type="Rhea" id="RHEA-COMP:9658"/>
        <dbReference type="Rhea" id="RHEA-COMP:9673"/>
        <dbReference type="ChEBI" id="CHEBI:30616"/>
        <dbReference type="ChEBI" id="CHEBI:32682"/>
        <dbReference type="ChEBI" id="CHEBI:33019"/>
        <dbReference type="ChEBI" id="CHEBI:78442"/>
        <dbReference type="ChEBI" id="CHEBI:78513"/>
        <dbReference type="ChEBI" id="CHEBI:456215"/>
        <dbReference type="EC" id="6.1.1.19"/>
    </reaction>
</comment>
<comment type="subunit">
    <text evidence="1">Monomer.</text>
</comment>
<comment type="subcellular location">
    <subcellularLocation>
        <location evidence="1">Cytoplasm</location>
    </subcellularLocation>
</comment>
<comment type="similarity">
    <text evidence="1">Belongs to the class-I aminoacyl-tRNA synthetase family.</text>
</comment>
<proteinExistence type="inferred from homology"/>